<proteinExistence type="inferred from homology"/>
<accession>P0CA12</accession>
<name>PRIM_ASFM2</name>
<sequence length="1102" mass="129256">MQETFKFLRSNSQGEAVEDKYSLETLKNHFVIRDEYNNLFRVFSGRDDFWKWEAAQPFEQKCFHEVVFGFLPQRLKFDIDFPVNKSYSNDNVDDNVDDNVYNILDMIINVIMDVFYETYSLPYNINLTREQILLTDSIGLNKKRELKYSFHIILYTYSVLNNNEAKAFTSKVLENLPKHIYPFVDPQVNKSIQNFRIIGSHKKGSMRVKMFNEELADVFETSMTTKKSDTLISTPFETTCLPCILTNVKETTSSSCDSIQQSELEEVLKFAGTLCKNHCFLRVYKNLVLFKRTSPSYCEICKRMHDKDNTLILRVTGNKVYQHCRHDNKHSLLMGSLSGTNNFVETYVEQVMSKSIEVHESILFEELPDTQKHIYDESSMREYERVPTLVVKAQMKIGKTIQLRNYLQKYYGNDSISKQQTIRFVTFRQIFSKNIQTRLPNFTLYSEVTGDLDSYERVIIQVESLFRLTSTAEPVDLLILDEVESIFNQFNSGLHKYFAPSFAIFMWMLETANHVICLDANLGNRTYNILQRFRGDVPIFFHWNQYQKAQNDMYYFTSSREIWLNNLLKDLLEDKKIVIPTNSLMEARLLQTFIQKKFPEKKIGFYSSKSSAHERESHFNNVSYYWGLIDILIYTPTISAGVSYEDKRFDVLYGFFNNMSCDVETCCQMLGRVRELKSKCYKICLQGKQNYFPETIEDIEMFTLQKRDTLFQTISNHQLSFTYCKETGRPIYYKTPYYHLWLETMRIQHLSKNHFITRFINQVADTGAKVFILTGEKLETVKQYTSIKMEIKHQDYVNVASAETIDANKALQIKQNLKEGITVDQRDLFAYEKYKLLEFYAWHGNKITPKFVEQYNSFMTKQNYTGRVQISRGKTVYESLTMLQTQELNFHQWAMQHAEHHDLQFNYSFQSHMYAIMLLTKCGFKCVQDPNILTNEQLMTKLVDEFVQYDLSAVSFEFKLKKPNKMDPQTILKFINKVLGLRYGLKIHHNKGNYYIKNTKAGSLIPFVRQPIKQSPCVVSNLLPITESSSTKEEISSTKEETYSTKEETYSTKEETCSIKEEISPIKEETCSIKEEISPIKEETCSIKEETSSIKEETFTET</sequence>
<organism>
    <name type="scientific">African swine fever virus (isolate Tick/Malawi/Lil 20-1/1983)</name>
    <name type="common">ASFV</name>
    <dbReference type="NCBI Taxonomy" id="10500"/>
    <lineage>
        <taxon>Viruses</taxon>
        <taxon>Varidnaviria</taxon>
        <taxon>Bamfordvirae</taxon>
        <taxon>Nucleocytoviricota</taxon>
        <taxon>Pokkesviricetes</taxon>
        <taxon>Asfuvirales</taxon>
        <taxon>Asfarviridae</taxon>
        <taxon>Asfivirus</taxon>
        <taxon>African swine fever virus</taxon>
    </lineage>
</organism>
<reference key="1">
    <citation type="submission" date="2003-03" db="EMBL/GenBank/DDBJ databases">
        <title>African swine fever virus genomes.</title>
        <authorList>
            <person name="Kutish G.F."/>
            <person name="Rock D.L."/>
        </authorList>
    </citation>
    <scope>NUCLEOTIDE SEQUENCE [LARGE SCALE GENOMIC DNA]</scope>
</reference>
<comment type="function">
    <text>May be involved in DNA replication.</text>
</comment>
<comment type="induction">
    <text evidence="2">Expressed in the early phase of the viral replicative cycle.</text>
</comment>
<comment type="similarity">
    <text evidence="2">Belongs to the asfivirus F1055L family.</text>
</comment>
<keyword id="KW-0235">DNA replication</keyword>
<keyword id="KW-0244">Early protein</keyword>
<organismHost>
    <name type="scientific">Ornithodoros</name>
    <name type="common">relapsing fever ticks</name>
    <dbReference type="NCBI Taxonomy" id="6937"/>
</organismHost>
<organismHost>
    <name type="scientific">Phacochoerus aethiopicus</name>
    <name type="common">Warthog</name>
    <dbReference type="NCBI Taxonomy" id="85517"/>
</organismHost>
<organismHost>
    <name type="scientific">Phacochoerus africanus</name>
    <name type="common">Warthog</name>
    <dbReference type="NCBI Taxonomy" id="41426"/>
</organismHost>
<organismHost>
    <name type="scientific">Potamochoerus larvatus</name>
    <name type="common">Bushpig</name>
    <dbReference type="NCBI Taxonomy" id="273792"/>
</organismHost>
<organismHost>
    <name type="scientific">Sus scrofa</name>
    <name type="common">Pig</name>
    <dbReference type="NCBI Taxonomy" id="9823"/>
</organismHost>
<dbReference type="EMBL" id="AY261361">
    <property type="status" value="NOT_ANNOTATED_CDS"/>
    <property type="molecule type" value="Genomic_DNA"/>
</dbReference>
<dbReference type="Proteomes" id="UP000000860">
    <property type="component" value="Segment"/>
</dbReference>
<dbReference type="GO" id="GO:0005524">
    <property type="term" value="F:ATP binding"/>
    <property type="evidence" value="ECO:0007669"/>
    <property type="project" value="InterPro"/>
</dbReference>
<dbReference type="GO" id="GO:0003688">
    <property type="term" value="F:DNA replication origin binding"/>
    <property type="evidence" value="ECO:0007669"/>
    <property type="project" value="InterPro"/>
</dbReference>
<dbReference type="GO" id="GO:0006260">
    <property type="term" value="P:DNA replication"/>
    <property type="evidence" value="ECO:0007669"/>
    <property type="project" value="UniProtKB-KW"/>
</dbReference>
<dbReference type="Gene3D" id="3.40.50.300">
    <property type="entry name" value="P-loop containing nucleotide triphosphate hydrolases"/>
    <property type="match status" value="1"/>
</dbReference>
<dbReference type="InterPro" id="IPR027417">
    <property type="entry name" value="P-loop_NTPase"/>
</dbReference>
<dbReference type="InterPro" id="IPR003450">
    <property type="entry name" value="Replication_origin-bd"/>
</dbReference>
<dbReference type="Pfam" id="PF02399">
    <property type="entry name" value="Herpes_ori_bp"/>
    <property type="match status" value="2"/>
</dbReference>
<dbReference type="Pfam" id="PF03121">
    <property type="entry name" value="Herpes_UL52"/>
    <property type="match status" value="1"/>
</dbReference>
<dbReference type="SUPFAM" id="SSF52540">
    <property type="entry name" value="P-loop containing nucleoside triphosphate hydrolases"/>
    <property type="match status" value="1"/>
</dbReference>
<protein>
    <recommendedName>
        <fullName>Putative helicase/primase complex protein</fullName>
        <shortName>pF1055L</shortName>
    </recommendedName>
</protein>
<feature type="chain" id="PRO_0000373469" description="Putative helicase/primase complex protein">
    <location>
        <begin position="1"/>
        <end position="1102"/>
    </location>
</feature>
<feature type="region of interest" description="Disordered" evidence="1">
    <location>
        <begin position="1031"/>
        <end position="1057"/>
    </location>
</feature>
<feature type="region of interest" description="Disordered" evidence="1">
    <location>
        <begin position="1082"/>
        <end position="1102"/>
    </location>
</feature>
<gene>
    <name type="ordered locus">Mal-055</name>
</gene>
<evidence type="ECO:0000256" key="1">
    <source>
        <dbReference type="SAM" id="MobiDB-lite"/>
    </source>
</evidence>
<evidence type="ECO:0000305" key="2"/>